<proteinExistence type="evidence at protein level"/>
<name>CR1FA_BACTA</name>
<evidence type="ECO:0000305" key="1"/>
<evidence type="ECO:0007829" key="2">
    <source>
        <dbReference type="PDB" id="9BUV"/>
    </source>
</evidence>
<feature type="chain" id="PRO_0000174042" description="Pesticidal crystal protein Cry1Fa">
    <location>
        <begin position="1"/>
        <end position="1174"/>
    </location>
</feature>
<feature type="helix" evidence="2">
    <location>
        <begin position="32"/>
        <end position="46"/>
    </location>
</feature>
<feature type="strand" evidence="2">
    <location>
        <begin position="50"/>
        <end position="52"/>
    </location>
</feature>
<feature type="helix" evidence="2">
    <location>
        <begin position="53"/>
        <end position="61"/>
    </location>
</feature>
<feature type="turn" evidence="2">
    <location>
        <begin position="62"/>
        <end position="65"/>
    </location>
</feature>
<feature type="helix" evidence="2">
    <location>
        <begin position="68"/>
        <end position="82"/>
    </location>
</feature>
<feature type="helix" evidence="2">
    <location>
        <begin position="88"/>
        <end position="117"/>
    </location>
</feature>
<feature type="helix" evidence="2">
    <location>
        <begin position="122"/>
        <end position="145"/>
    </location>
</feature>
<feature type="turn" evidence="2">
    <location>
        <begin position="150"/>
        <end position="155"/>
    </location>
</feature>
<feature type="helix" evidence="2">
    <location>
        <begin position="156"/>
        <end position="180"/>
    </location>
</feature>
<feature type="helix" evidence="2">
    <location>
        <begin position="184"/>
        <end position="216"/>
    </location>
</feature>
<feature type="helix" evidence="2">
    <location>
        <begin position="221"/>
        <end position="237"/>
    </location>
</feature>
<feature type="helix" evidence="2">
    <location>
        <begin position="239"/>
        <end position="242"/>
    </location>
</feature>
<feature type="helix" evidence="2">
    <location>
        <begin position="243"/>
        <end position="248"/>
    </location>
</feature>
<feature type="turn" evidence="2">
    <location>
        <begin position="250"/>
        <end position="252"/>
    </location>
</feature>
<feature type="strand" evidence="2">
    <location>
        <begin position="264"/>
        <end position="267"/>
    </location>
</feature>
<feature type="helix" evidence="2">
    <location>
        <begin position="269"/>
        <end position="272"/>
    </location>
</feature>
<feature type="helix" evidence="2">
    <location>
        <begin position="283"/>
        <end position="288"/>
    </location>
</feature>
<feature type="strand" evidence="2">
    <location>
        <begin position="299"/>
        <end position="310"/>
    </location>
</feature>
<feature type="strand" evidence="2">
    <location>
        <begin position="313"/>
        <end position="324"/>
    </location>
</feature>
<feature type="strand" evidence="2">
    <location>
        <begin position="330"/>
        <end position="332"/>
    </location>
</feature>
<feature type="strand" evidence="2">
    <location>
        <begin position="336"/>
        <end position="338"/>
    </location>
</feature>
<feature type="strand" evidence="2">
    <location>
        <begin position="345"/>
        <end position="350"/>
    </location>
</feature>
<feature type="strand" evidence="2">
    <location>
        <begin position="355"/>
        <end position="366"/>
    </location>
</feature>
<feature type="strand" evidence="2">
    <location>
        <begin position="368"/>
        <end position="370"/>
    </location>
</feature>
<feature type="strand" evidence="2">
    <location>
        <begin position="374"/>
        <end position="385"/>
    </location>
</feature>
<feature type="turn" evidence="2">
    <location>
        <begin position="386"/>
        <end position="388"/>
    </location>
</feature>
<feature type="strand" evidence="2">
    <location>
        <begin position="391"/>
        <end position="395"/>
    </location>
</feature>
<feature type="strand" evidence="2">
    <location>
        <begin position="399"/>
        <end position="401"/>
    </location>
</feature>
<feature type="helix" evidence="2">
    <location>
        <begin position="402"/>
        <end position="404"/>
    </location>
</feature>
<feature type="helix" evidence="2">
    <location>
        <begin position="415"/>
        <end position="418"/>
    </location>
</feature>
<feature type="strand" evidence="2">
    <location>
        <begin position="420"/>
        <end position="432"/>
    </location>
</feature>
<feature type="helix" evidence="2">
    <location>
        <begin position="433"/>
        <end position="435"/>
    </location>
</feature>
<feature type="strand" evidence="2">
    <location>
        <begin position="440"/>
        <end position="450"/>
    </location>
</feature>
<feature type="strand" evidence="2">
    <location>
        <begin position="463"/>
        <end position="468"/>
    </location>
</feature>
<feature type="helix" evidence="2">
    <location>
        <begin position="469"/>
        <end position="471"/>
    </location>
</feature>
<feature type="strand" evidence="2">
    <location>
        <begin position="473"/>
        <end position="475"/>
    </location>
</feature>
<feature type="strand" evidence="2">
    <location>
        <begin position="480"/>
        <end position="482"/>
    </location>
</feature>
<feature type="strand" evidence="2">
    <location>
        <begin position="486"/>
        <end position="490"/>
    </location>
</feature>
<feature type="strand" evidence="2">
    <location>
        <begin position="492"/>
        <end position="508"/>
    </location>
</feature>
<feature type="strand" evidence="2">
    <location>
        <begin position="515"/>
        <end position="526"/>
    </location>
</feature>
<feature type="strand" evidence="2">
    <location>
        <begin position="528"/>
        <end position="534"/>
    </location>
</feature>
<feature type="turn" evidence="2">
    <location>
        <begin position="535"/>
        <end position="537"/>
    </location>
</feature>
<feature type="strand" evidence="2">
    <location>
        <begin position="538"/>
        <end position="544"/>
    </location>
</feature>
<feature type="helix" evidence="2">
    <location>
        <begin position="556"/>
        <end position="558"/>
    </location>
</feature>
<feature type="strand" evidence="2">
    <location>
        <begin position="560"/>
        <end position="563"/>
    </location>
</feature>
<feature type="strand" evidence="2">
    <location>
        <begin position="571"/>
        <end position="584"/>
    </location>
</feature>
<feature type="strand" evidence="2">
    <location>
        <begin position="590"/>
        <end position="600"/>
    </location>
</feature>
<protein>
    <recommendedName>
        <fullName>Pesticidal crystal protein Cry1Fa</fullName>
    </recommendedName>
    <alternativeName>
        <fullName>134 kDa crystal protein</fullName>
    </alternativeName>
    <alternativeName>
        <fullName>Crystaline entomocidal protoxin</fullName>
    </alternativeName>
    <alternativeName>
        <fullName>Insecticidal delta-endotoxin CryIF(a)</fullName>
    </alternativeName>
</protein>
<dbReference type="EMBL" id="M63897">
    <property type="protein sequence ID" value="AAA22348.1"/>
    <property type="molecule type" value="Genomic_DNA"/>
</dbReference>
<dbReference type="EMBL" id="M73254">
    <property type="protein sequence ID" value="AAA22347.1"/>
    <property type="molecule type" value="Genomic_DNA"/>
</dbReference>
<dbReference type="PIR" id="A42459">
    <property type="entry name" value="A42459"/>
</dbReference>
<dbReference type="PDB" id="6DJ4">
    <property type="method" value="X-ray"/>
    <property type="resolution" value="3.01 A"/>
    <property type="chains" value="A=470-612"/>
</dbReference>
<dbReference type="PDB" id="9BUV">
    <property type="method" value="X-ray"/>
    <property type="resolution" value="2.02 A"/>
    <property type="chains" value="A=1-1174"/>
</dbReference>
<dbReference type="PDBsum" id="6DJ4"/>
<dbReference type="PDBsum" id="9BUV"/>
<dbReference type="SMR" id="Q03746"/>
<dbReference type="ABCD" id="Q03746">
    <property type="antibodies" value="4 sequenced antibodies"/>
</dbReference>
<dbReference type="GO" id="GO:0005102">
    <property type="term" value="F:signaling receptor binding"/>
    <property type="evidence" value="ECO:0007669"/>
    <property type="project" value="InterPro"/>
</dbReference>
<dbReference type="GO" id="GO:0090729">
    <property type="term" value="F:toxin activity"/>
    <property type="evidence" value="ECO:0007669"/>
    <property type="project" value="UniProtKB-KW"/>
</dbReference>
<dbReference type="GO" id="GO:0030435">
    <property type="term" value="P:sporulation resulting in formation of a cellular spore"/>
    <property type="evidence" value="ECO:0007669"/>
    <property type="project" value="UniProtKB-KW"/>
</dbReference>
<dbReference type="GO" id="GO:0001907">
    <property type="term" value="P:symbiont-mediated killing of host cell"/>
    <property type="evidence" value="ECO:0007669"/>
    <property type="project" value="InterPro"/>
</dbReference>
<dbReference type="CDD" id="cd04085">
    <property type="entry name" value="delta_endotoxin_C"/>
    <property type="match status" value="1"/>
</dbReference>
<dbReference type="Gene3D" id="2.60.120.260">
    <property type="entry name" value="Galactose-binding domain-like"/>
    <property type="match status" value="2"/>
</dbReference>
<dbReference type="Gene3D" id="2.100.10.10">
    <property type="entry name" value="Pesticidal crystal protein, central domain"/>
    <property type="match status" value="1"/>
</dbReference>
<dbReference type="Gene3D" id="1.20.190.10">
    <property type="entry name" value="Pesticidal crystal protein, N-terminal domain"/>
    <property type="match status" value="1"/>
</dbReference>
<dbReference type="InterPro" id="IPR048645">
    <property type="entry name" value="Cry1Ac-like_dom-VII"/>
</dbReference>
<dbReference type="InterPro" id="IPR041587">
    <property type="entry name" value="Cry_V"/>
</dbReference>
<dbReference type="InterPro" id="IPR008979">
    <property type="entry name" value="Galactose-bd-like_sf"/>
</dbReference>
<dbReference type="InterPro" id="IPR038979">
    <property type="entry name" value="Pest_crys"/>
</dbReference>
<dbReference type="InterPro" id="IPR005638">
    <property type="entry name" value="Pest_crys_dom-III"/>
</dbReference>
<dbReference type="InterPro" id="IPR005639">
    <property type="entry name" value="Pest_crys_dom_I"/>
</dbReference>
<dbReference type="InterPro" id="IPR036716">
    <property type="entry name" value="Pest_crys_N_sf"/>
</dbReference>
<dbReference type="InterPro" id="IPR036399">
    <property type="entry name" value="Pest_cryst_cen_dom_sf"/>
</dbReference>
<dbReference type="InterPro" id="IPR001178">
    <property type="entry name" value="Pest_cryst_dom_II"/>
</dbReference>
<dbReference type="PANTHER" id="PTHR37003">
    <property type="entry name" value="ENDOTOXIN_N DOMAIN-CONTAINING PROTEIN-RELATED"/>
    <property type="match status" value="1"/>
</dbReference>
<dbReference type="PANTHER" id="PTHR37003:SF2">
    <property type="entry name" value="PESTICIDAL CRYSTAL PROTEIN N-TERMINAL DOMAIN-CONTAINING PROTEIN"/>
    <property type="match status" value="1"/>
</dbReference>
<dbReference type="Pfam" id="PF17997">
    <property type="entry name" value="Cry1Ac_D5"/>
    <property type="match status" value="1"/>
</dbReference>
<dbReference type="Pfam" id="PF21463">
    <property type="entry name" value="Cry1Ac_dom-VII"/>
    <property type="match status" value="1"/>
</dbReference>
<dbReference type="Pfam" id="PF03944">
    <property type="entry name" value="Endotoxin_C"/>
    <property type="match status" value="1"/>
</dbReference>
<dbReference type="Pfam" id="PF00555">
    <property type="entry name" value="Endotoxin_M"/>
    <property type="match status" value="1"/>
</dbReference>
<dbReference type="Pfam" id="PF03945">
    <property type="entry name" value="Endotoxin_N"/>
    <property type="match status" value="1"/>
</dbReference>
<dbReference type="SUPFAM" id="SSF51096">
    <property type="entry name" value="delta-Endotoxin (insectocide), middle domain"/>
    <property type="match status" value="1"/>
</dbReference>
<dbReference type="SUPFAM" id="SSF56849">
    <property type="entry name" value="delta-Endotoxin (insectocide), N-terminal domain"/>
    <property type="match status" value="1"/>
</dbReference>
<dbReference type="SUPFAM" id="SSF49785">
    <property type="entry name" value="Galactose-binding domain-like"/>
    <property type="match status" value="1"/>
</dbReference>
<comment type="function">
    <text>Promotes colloidosmotic lysis by binding to the midgut epithelial cells of many lepidopteran larvae.</text>
</comment>
<comment type="developmental stage">
    <text>The crystal protein is produced during sporulation and is accumulated both as an inclusion and as part of the spore coat.</text>
</comment>
<comment type="miscellaneous">
    <text>Toxic segment of the protein is located in the N-terminus.</text>
</comment>
<comment type="similarity">
    <text evidence="1">Belongs to the delta endotoxin family.</text>
</comment>
<gene>
    <name type="primary">cry1Fa</name>
    <name type="synonym">cryIF</name>
    <name type="synonym">cryIF(a)</name>
</gene>
<organism>
    <name type="scientific">Bacillus thuringiensis subsp. aizawai</name>
    <dbReference type="NCBI Taxonomy" id="1433"/>
    <lineage>
        <taxon>Bacteria</taxon>
        <taxon>Bacillati</taxon>
        <taxon>Bacillota</taxon>
        <taxon>Bacilli</taxon>
        <taxon>Bacillales</taxon>
        <taxon>Bacillaceae</taxon>
        <taxon>Bacillus</taxon>
        <taxon>Bacillus cereus group</taxon>
    </lineage>
</organism>
<reference key="1">
    <citation type="journal article" date="1991" name="J. Bacteriol.">
        <title>Isolation and characterization of a novel insecticidal crystal protein gene from Bacillus thuringiensis subsp. aizawai.</title>
        <authorList>
            <person name="Chambers J.A."/>
            <person name="Jelen A."/>
            <person name="Gilbert M.P."/>
            <person name="Jany C.S."/>
            <person name="Johnson T.B."/>
            <person name="Gawron-Burke C."/>
        </authorList>
    </citation>
    <scope>NUCLEOTIDE SEQUENCE [GENOMIC DNA]</scope>
    <source>
        <strain>EG6346</strain>
    </source>
</reference>
<reference key="2">
    <citation type="patent" date="1993-02-23" number="US5188960">
        <title>Bacillus thuringiensis isolate active against lepidopteran pests, and genes encoding novel lepidopteran-active toxins.</title>
        <authorList>
            <person name="Payne J.M."/>
            <person name="Sick A.J."/>
        </authorList>
    </citation>
    <scope>NUCLEOTIDE SEQUENCE [GENOMIC DNA]</scope>
    <source>
        <strain>NRRL B-18484 / PS81I</strain>
    </source>
</reference>
<accession>Q03746</accession>
<keyword id="KW-0002">3D-structure</keyword>
<keyword id="KW-0749">Sporulation</keyword>
<keyword id="KW-0800">Toxin</keyword>
<keyword id="KW-0843">Virulence</keyword>
<sequence length="1174" mass="133622">MENNIQNQCVPYNCLNNPEVEILNEERSTGRLPLDISLSLTRFLLSEFVPGVGVAFGLFDLIWGFITPSDWSLFLLQIEQLIEQRIETLERNRAITTLRGLADSYEIYIEALREWEANPNNAQLREDVRIRFANTDDALITAINNFTLTSFEIPLLSVYVQAANLHLSLLRDAVSFGQGWGLDIATVNNHYNRLINLIHRYTKHCLDTYNQGLENLRGTNTRQWARFNQFRRDLTLTVLDIVALFPNYDVRTYPIQTSSQLTREIYTSSVIEDSPVSANIPNGFNRAEFGVRPPHLMDFMNSLFVTAETVRSQTVWGGHLVSSRNTAGNRINFPSYGVFNPGGAIWIADEDPRPFYRTLSDPVFVRGGFGNPHYVLGLRGVAFQQTGTNHTRTFRNSGTIDSLDEIPPQDNSGAPWNDYSHVLNHVTFVRWPGEISGSDSWRAPMFSWTHRSATPTNTIDPERITQIPLVKAHTLQSGTTVVRGPGFTGGDILRRTSGGPFAYTIVNINGQLPQRYRARIRYASTTNLRIYVTVAGERIFAGQFNKTMDTGDPLTFQSFSYATINTAFTFPMSQSSFTVGADTFSSGNEVYIDRFELIPVTATFEAEYDLERAQKAVNALFTSINQIGIKTDVTDYHIDQVSNLVDCLSDEFCLDEKRELSEKVKHAKRLSDERNLLQDPNFKGINRQLDRGWRGSTDITIQRGDDVFKENYVTLPGTFDECYPTYLYQKIDESKLKPYTRYQLRGYIEDSQDLEIYLIRYNAKHETVNVLGTGSLWPLSVQSPIRKCGEPNRCAPHLEWNPDLDCSCRDGEKCAHHSHHFSLDIDVGCTDLNEDLDVWVIFKIKTQDGHARLGNLEFLEEKPLVGEALARVKRAEKKWRDKREKLELETNIVYKEAKESVDALFVNSQYDQLQADTNIAMIHAADKRVHRIREAYLPELSVIPGVNVDIFEELKGRIFTAFFLYDARNVIKNGDFNNGLSCWNVKGHVDVEEQNNHRSVLVVPEWEAEVSQEVRVCPGRGYILRVTAYKEGYGEGCVTIHEIENNTDELKFSNCVEEEVYPNNTVTCNDYTANQEEYGGAYTSRNRGYDETYGSNSSVPADYASVYEEKSYTDGRRDNPCESNRGYGDYTPLPAGYVTKELEYFPETDKVWIEIGETEGTFIVDSVELLLMEE</sequence>